<keyword id="KW-0028">Amino-acid biosynthesis</keyword>
<keyword id="KW-0963">Cytoplasm</keyword>
<keyword id="KW-0220">Diaminopimelate biosynthesis</keyword>
<keyword id="KW-0457">Lysine biosynthesis</keyword>
<keyword id="KW-0520">NAD</keyword>
<keyword id="KW-0521">NADP</keyword>
<keyword id="KW-0560">Oxidoreductase</keyword>
<sequence length="246" mass="26849">MRVGIVGCSGRMGTLLSVLLSSTTRFTLGPGYSRKGAHSLASVIENNDVLVDFSSSSFSEELLSALLSNPKPLIFATTKPIASCSIDEKLERLAVHVPVVVCPNTSLGAYVQKRLAALLARVFDDTYDIRVAEVHHRHKRDPISGTANELVSVLCDAKQKEWNQEYSVGTNCNNVKNIELHASRVGNVSGEHEVAFISDKEQIVLKHTVFSREVFAEGTLRILDWLIDSSPPPGYYGPEVGLKVSV</sequence>
<evidence type="ECO:0000255" key="1">
    <source>
        <dbReference type="HAMAP-Rule" id="MF_00102"/>
    </source>
</evidence>
<evidence type="ECO:0000305" key="2"/>
<reference key="1">
    <citation type="journal article" date="2006" name="DNA Res.">
        <title>Genome sequence of the cat pathogen, Chlamydophila felis.</title>
        <authorList>
            <person name="Azuma Y."/>
            <person name="Hirakawa H."/>
            <person name="Yamashita A."/>
            <person name="Cai Y."/>
            <person name="Rahman M.A."/>
            <person name="Suzuki H."/>
            <person name="Mitaku S."/>
            <person name="Toh H."/>
            <person name="Goto S."/>
            <person name="Murakami T."/>
            <person name="Sugi K."/>
            <person name="Hayashi H."/>
            <person name="Fukushi H."/>
            <person name="Hattori M."/>
            <person name="Kuhara S."/>
            <person name="Shirai M."/>
        </authorList>
    </citation>
    <scope>NUCLEOTIDE SEQUENCE [LARGE SCALE GENOMIC DNA]</scope>
    <source>
        <strain>Fe/C-56</strain>
    </source>
</reference>
<dbReference type="EC" id="1.17.1.8" evidence="1"/>
<dbReference type="EMBL" id="AP006861">
    <property type="protein sequence ID" value="BAE81075.1"/>
    <property type="molecule type" value="Genomic_DNA"/>
</dbReference>
<dbReference type="RefSeq" id="WP_011457856.1">
    <property type="nucleotide sequence ID" value="NC_007899.1"/>
</dbReference>
<dbReference type="SMR" id="Q255G3"/>
<dbReference type="STRING" id="264202.CF0303"/>
<dbReference type="KEGG" id="cfe:CF0303"/>
<dbReference type="eggNOG" id="COG0289">
    <property type="taxonomic scope" value="Bacteria"/>
</dbReference>
<dbReference type="HOGENOM" id="CLU_047479_2_2_0"/>
<dbReference type="OrthoDB" id="9790352at2"/>
<dbReference type="UniPathway" id="UPA00034">
    <property type="reaction ID" value="UER00018"/>
</dbReference>
<dbReference type="Proteomes" id="UP000001260">
    <property type="component" value="Chromosome"/>
</dbReference>
<dbReference type="GO" id="GO:0005829">
    <property type="term" value="C:cytosol"/>
    <property type="evidence" value="ECO:0007669"/>
    <property type="project" value="TreeGrafter"/>
</dbReference>
<dbReference type="GO" id="GO:0008839">
    <property type="term" value="F:4-hydroxy-tetrahydrodipicolinate reductase"/>
    <property type="evidence" value="ECO:0007669"/>
    <property type="project" value="UniProtKB-EC"/>
</dbReference>
<dbReference type="GO" id="GO:0051287">
    <property type="term" value="F:NAD binding"/>
    <property type="evidence" value="ECO:0007669"/>
    <property type="project" value="UniProtKB-UniRule"/>
</dbReference>
<dbReference type="GO" id="GO:0050661">
    <property type="term" value="F:NADP binding"/>
    <property type="evidence" value="ECO:0007669"/>
    <property type="project" value="UniProtKB-UniRule"/>
</dbReference>
<dbReference type="GO" id="GO:0016726">
    <property type="term" value="F:oxidoreductase activity, acting on CH or CH2 groups, NAD or NADP as acceptor"/>
    <property type="evidence" value="ECO:0007669"/>
    <property type="project" value="UniProtKB-UniRule"/>
</dbReference>
<dbReference type="GO" id="GO:0019877">
    <property type="term" value="P:diaminopimelate biosynthetic process"/>
    <property type="evidence" value="ECO:0007669"/>
    <property type="project" value="UniProtKB-UniRule"/>
</dbReference>
<dbReference type="GO" id="GO:0009089">
    <property type="term" value="P:lysine biosynthetic process via diaminopimelate"/>
    <property type="evidence" value="ECO:0007669"/>
    <property type="project" value="UniProtKB-UniRule"/>
</dbReference>
<dbReference type="Gene3D" id="3.30.360.10">
    <property type="entry name" value="Dihydrodipicolinate Reductase, domain 2"/>
    <property type="match status" value="1"/>
</dbReference>
<dbReference type="Gene3D" id="3.40.50.720">
    <property type="entry name" value="NAD(P)-binding Rossmann-like Domain"/>
    <property type="match status" value="1"/>
</dbReference>
<dbReference type="HAMAP" id="MF_00102">
    <property type="entry name" value="DapB"/>
    <property type="match status" value="1"/>
</dbReference>
<dbReference type="InterPro" id="IPR022663">
    <property type="entry name" value="DapB_C"/>
</dbReference>
<dbReference type="InterPro" id="IPR000846">
    <property type="entry name" value="DapB_N"/>
</dbReference>
<dbReference type="InterPro" id="IPR022664">
    <property type="entry name" value="DapB_N_CS"/>
</dbReference>
<dbReference type="InterPro" id="IPR023940">
    <property type="entry name" value="DHDPR_bac"/>
</dbReference>
<dbReference type="InterPro" id="IPR036291">
    <property type="entry name" value="NAD(P)-bd_dom_sf"/>
</dbReference>
<dbReference type="PANTHER" id="PTHR20836:SF0">
    <property type="entry name" value="4-HYDROXY-TETRAHYDRODIPICOLINATE REDUCTASE 1, CHLOROPLASTIC-RELATED"/>
    <property type="match status" value="1"/>
</dbReference>
<dbReference type="PANTHER" id="PTHR20836">
    <property type="entry name" value="DIHYDRODIPICOLINATE REDUCTASE"/>
    <property type="match status" value="1"/>
</dbReference>
<dbReference type="Pfam" id="PF05173">
    <property type="entry name" value="DapB_C"/>
    <property type="match status" value="1"/>
</dbReference>
<dbReference type="Pfam" id="PF01113">
    <property type="entry name" value="DapB_N"/>
    <property type="match status" value="1"/>
</dbReference>
<dbReference type="PIRSF" id="PIRSF000161">
    <property type="entry name" value="DHPR"/>
    <property type="match status" value="1"/>
</dbReference>
<dbReference type="SUPFAM" id="SSF55347">
    <property type="entry name" value="Glyceraldehyde-3-phosphate dehydrogenase-like, C-terminal domain"/>
    <property type="match status" value="1"/>
</dbReference>
<dbReference type="SUPFAM" id="SSF51735">
    <property type="entry name" value="NAD(P)-binding Rossmann-fold domains"/>
    <property type="match status" value="1"/>
</dbReference>
<dbReference type="PROSITE" id="PS01298">
    <property type="entry name" value="DAPB"/>
    <property type="match status" value="1"/>
</dbReference>
<proteinExistence type="inferred from homology"/>
<name>DAPB_CHLFF</name>
<gene>
    <name evidence="1" type="primary">dapB</name>
    <name type="ordered locus">CF0303</name>
</gene>
<comment type="function">
    <text evidence="1">Catalyzes the conversion of 4-hydroxy-tetrahydrodipicolinate (HTPA) to tetrahydrodipicolinate.</text>
</comment>
<comment type="catalytic activity">
    <reaction evidence="1">
        <text>(S)-2,3,4,5-tetrahydrodipicolinate + NAD(+) + H2O = (2S,4S)-4-hydroxy-2,3,4,5-tetrahydrodipicolinate + NADH + H(+)</text>
        <dbReference type="Rhea" id="RHEA:35323"/>
        <dbReference type="ChEBI" id="CHEBI:15377"/>
        <dbReference type="ChEBI" id="CHEBI:15378"/>
        <dbReference type="ChEBI" id="CHEBI:16845"/>
        <dbReference type="ChEBI" id="CHEBI:57540"/>
        <dbReference type="ChEBI" id="CHEBI:57945"/>
        <dbReference type="ChEBI" id="CHEBI:67139"/>
        <dbReference type="EC" id="1.17.1.8"/>
    </reaction>
</comment>
<comment type="catalytic activity">
    <reaction evidence="1">
        <text>(S)-2,3,4,5-tetrahydrodipicolinate + NADP(+) + H2O = (2S,4S)-4-hydroxy-2,3,4,5-tetrahydrodipicolinate + NADPH + H(+)</text>
        <dbReference type="Rhea" id="RHEA:35331"/>
        <dbReference type="ChEBI" id="CHEBI:15377"/>
        <dbReference type="ChEBI" id="CHEBI:15378"/>
        <dbReference type="ChEBI" id="CHEBI:16845"/>
        <dbReference type="ChEBI" id="CHEBI:57783"/>
        <dbReference type="ChEBI" id="CHEBI:58349"/>
        <dbReference type="ChEBI" id="CHEBI:67139"/>
        <dbReference type="EC" id="1.17.1.8"/>
    </reaction>
</comment>
<comment type="pathway">
    <text evidence="1">Amino-acid biosynthesis; L-lysine biosynthesis via DAP pathway; (S)-tetrahydrodipicolinate from L-aspartate: step 4/4.</text>
</comment>
<comment type="subcellular location">
    <subcellularLocation>
        <location evidence="1">Cytoplasm</location>
    </subcellularLocation>
</comment>
<comment type="similarity">
    <text evidence="1">Belongs to the DapB family.</text>
</comment>
<comment type="caution">
    <text evidence="2">Was originally thought to be a dihydrodipicolinate reductase (DHDPR), catalyzing the conversion of dihydrodipicolinate to tetrahydrodipicolinate. However, it was shown in E.coli that the substrate of the enzymatic reaction is not dihydrodipicolinate (DHDP) but in fact (2S,4S)-4-hydroxy-2,3,4,5-tetrahydrodipicolinic acid (HTPA), the product released by the DapA-catalyzed reaction.</text>
</comment>
<organism>
    <name type="scientific">Chlamydia felis (strain Fe/C-56)</name>
    <name type="common">Chlamydophila felis</name>
    <dbReference type="NCBI Taxonomy" id="264202"/>
    <lineage>
        <taxon>Bacteria</taxon>
        <taxon>Pseudomonadati</taxon>
        <taxon>Chlamydiota</taxon>
        <taxon>Chlamydiia</taxon>
        <taxon>Chlamydiales</taxon>
        <taxon>Chlamydiaceae</taxon>
        <taxon>Chlamydia/Chlamydophila group</taxon>
        <taxon>Chlamydia</taxon>
    </lineage>
</organism>
<accession>Q255G3</accession>
<protein>
    <recommendedName>
        <fullName evidence="1">4-hydroxy-tetrahydrodipicolinate reductase</fullName>
        <shortName evidence="1">HTPA reductase</shortName>
        <ecNumber evidence="1">1.17.1.8</ecNumber>
    </recommendedName>
</protein>
<feature type="chain" id="PRO_1000093951" description="4-hydroxy-tetrahydrodipicolinate reductase">
    <location>
        <begin position="1"/>
        <end position="246"/>
    </location>
</feature>
<feature type="active site" description="Proton donor/acceptor" evidence="1">
    <location>
        <position position="135"/>
    </location>
</feature>
<feature type="active site" description="Proton donor" evidence="1">
    <location>
        <position position="139"/>
    </location>
</feature>
<feature type="binding site" evidence="1">
    <location>
        <begin position="7"/>
        <end position="12"/>
    </location>
    <ligand>
        <name>NAD(+)</name>
        <dbReference type="ChEBI" id="CHEBI:57540"/>
    </ligand>
</feature>
<feature type="binding site" evidence="1">
    <location>
        <position position="34"/>
    </location>
    <ligand>
        <name>NADP(+)</name>
        <dbReference type="ChEBI" id="CHEBI:58349"/>
    </ligand>
</feature>
<feature type="binding site" evidence="1">
    <location>
        <begin position="76"/>
        <end position="78"/>
    </location>
    <ligand>
        <name>NAD(+)</name>
        <dbReference type="ChEBI" id="CHEBI:57540"/>
    </ligand>
</feature>
<feature type="binding site" evidence="1">
    <location>
        <begin position="102"/>
        <end position="105"/>
    </location>
    <ligand>
        <name>NAD(+)</name>
        <dbReference type="ChEBI" id="CHEBI:57540"/>
    </ligand>
</feature>
<feature type="binding site" evidence="1">
    <location>
        <position position="136"/>
    </location>
    <ligand>
        <name>(S)-2,3,4,5-tetrahydrodipicolinate</name>
        <dbReference type="ChEBI" id="CHEBI:16845"/>
    </ligand>
</feature>
<feature type="binding site" evidence="1">
    <location>
        <begin position="145"/>
        <end position="146"/>
    </location>
    <ligand>
        <name>(S)-2,3,4,5-tetrahydrodipicolinate</name>
        <dbReference type="ChEBI" id="CHEBI:16845"/>
    </ligand>
</feature>